<evidence type="ECO:0000255" key="1">
    <source>
        <dbReference type="HAMAP-Rule" id="MF_00274"/>
    </source>
</evidence>
<organism>
    <name type="scientific">Brucella abortus (strain S19)</name>
    <dbReference type="NCBI Taxonomy" id="430066"/>
    <lineage>
        <taxon>Bacteria</taxon>
        <taxon>Pseudomonadati</taxon>
        <taxon>Pseudomonadota</taxon>
        <taxon>Alphaproteobacteria</taxon>
        <taxon>Hyphomicrobiales</taxon>
        <taxon>Brucellaceae</taxon>
        <taxon>Brucella/Ochrobactrum group</taxon>
        <taxon>Brucella</taxon>
    </lineage>
</organism>
<dbReference type="EMBL" id="CP000887">
    <property type="protein sequence ID" value="ACD71591.1"/>
    <property type="molecule type" value="Genomic_DNA"/>
</dbReference>
<dbReference type="RefSeq" id="WP_002965280.1">
    <property type="nucleotide sequence ID" value="NC_010742.1"/>
</dbReference>
<dbReference type="SMR" id="B2S7T7"/>
<dbReference type="KEGG" id="bmc:BAbS19_I00290"/>
<dbReference type="HOGENOM" id="CLU_140930_0_1_5"/>
<dbReference type="Proteomes" id="UP000002565">
    <property type="component" value="Chromosome 1"/>
</dbReference>
<dbReference type="GO" id="GO:0043590">
    <property type="term" value="C:bacterial nucleoid"/>
    <property type="evidence" value="ECO:0007669"/>
    <property type="project" value="UniProtKB-UniRule"/>
</dbReference>
<dbReference type="GO" id="GO:0005829">
    <property type="term" value="C:cytosol"/>
    <property type="evidence" value="ECO:0007669"/>
    <property type="project" value="TreeGrafter"/>
</dbReference>
<dbReference type="GO" id="GO:0003677">
    <property type="term" value="F:DNA binding"/>
    <property type="evidence" value="ECO:0007669"/>
    <property type="project" value="UniProtKB-UniRule"/>
</dbReference>
<dbReference type="Gene3D" id="3.30.1310.10">
    <property type="entry name" value="Nucleoid-associated protein YbaB-like domain"/>
    <property type="match status" value="1"/>
</dbReference>
<dbReference type="HAMAP" id="MF_00274">
    <property type="entry name" value="DNA_YbaB_EbfC"/>
    <property type="match status" value="1"/>
</dbReference>
<dbReference type="InterPro" id="IPR036894">
    <property type="entry name" value="YbaB-like_sf"/>
</dbReference>
<dbReference type="InterPro" id="IPR004401">
    <property type="entry name" value="YbaB/EbfC"/>
</dbReference>
<dbReference type="NCBIfam" id="TIGR00103">
    <property type="entry name" value="DNA_YbaB_EbfC"/>
    <property type="match status" value="1"/>
</dbReference>
<dbReference type="PANTHER" id="PTHR33449">
    <property type="entry name" value="NUCLEOID-ASSOCIATED PROTEIN YBAB"/>
    <property type="match status" value="1"/>
</dbReference>
<dbReference type="PANTHER" id="PTHR33449:SF1">
    <property type="entry name" value="NUCLEOID-ASSOCIATED PROTEIN YBAB"/>
    <property type="match status" value="1"/>
</dbReference>
<dbReference type="Pfam" id="PF02575">
    <property type="entry name" value="YbaB_DNA_bd"/>
    <property type="match status" value="1"/>
</dbReference>
<dbReference type="PIRSF" id="PIRSF004555">
    <property type="entry name" value="UCP004555"/>
    <property type="match status" value="1"/>
</dbReference>
<dbReference type="SUPFAM" id="SSF82607">
    <property type="entry name" value="YbaB-like"/>
    <property type="match status" value="1"/>
</dbReference>
<protein>
    <recommendedName>
        <fullName evidence="1">Nucleoid-associated protein BAbS19_I00290</fullName>
    </recommendedName>
</protein>
<reference key="1">
    <citation type="journal article" date="2008" name="PLoS ONE">
        <title>Genome sequence of Brucella abortus vaccine strain S19 compared to virulent strains yields candidate virulence genes.</title>
        <authorList>
            <person name="Crasta O.R."/>
            <person name="Folkerts O."/>
            <person name="Fei Z."/>
            <person name="Mane S.P."/>
            <person name="Evans C."/>
            <person name="Martino-Catt S."/>
            <person name="Bricker B."/>
            <person name="Yu G."/>
            <person name="Du L."/>
            <person name="Sobral B.W."/>
        </authorList>
    </citation>
    <scope>NUCLEOTIDE SEQUENCE [LARGE SCALE GENOMIC DNA]</scope>
    <source>
        <strain>S19</strain>
    </source>
</reference>
<sequence>MRDMMGMMKQAKELQAKMKAMQDEIATMEASASSGGGLVTVTLSGKGTLSALKIDPSLMKEDEVEILEDLIIAAHNDAKAKLEAAMAEKTQSLTAGLPIPPGFKLPF</sequence>
<gene>
    <name type="ordered locus">BAbS19_I00290</name>
</gene>
<feature type="chain" id="PRO_1000114588" description="Nucleoid-associated protein BAbS19_I00290">
    <location>
        <begin position="1"/>
        <end position="107"/>
    </location>
</feature>
<keyword id="KW-0963">Cytoplasm</keyword>
<keyword id="KW-0238">DNA-binding</keyword>
<name>Y290_BRUA1</name>
<comment type="function">
    <text evidence="1">Binds to DNA and alters its conformation. May be involved in regulation of gene expression, nucleoid organization and DNA protection.</text>
</comment>
<comment type="subunit">
    <text evidence="1">Homodimer.</text>
</comment>
<comment type="subcellular location">
    <subcellularLocation>
        <location evidence="1">Cytoplasm</location>
        <location evidence="1">Nucleoid</location>
    </subcellularLocation>
</comment>
<comment type="similarity">
    <text evidence="1">Belongs to the YbaB/EbfC family.</text>
</comment>
<accession>B2S7T7</accession>
<proteinExistence type="inferred from homology"/>